<reference key="1">
    <citation type="submission" date="2007-05" db="EMBL/GenBank/DDBJ databases">
        <title>Complete sequence of chromosome of Staphylococcus aureus subsp. aureus JH9.</title>
        <authorList>
            <consortium name="US DOE Joint Genome Institute"/>
            <person name="Copeland A."/>
            <person name="Lucas S."/>
            <person name="Lapidus A."/>
            <person name="Barry K."/>
            <person name="Detter J.C."/>
            <person name="Glavina del Rio T."/>
            <person name="Hammon N."/>
            <person name="Israni S."/>
            <person name="Pitluck S."/>
            <person name="Chain P."/>
            <person name="Malfatti S."/>
            <person name="Shin M."/>
            <person name="Vergez L."/>
            <person name="Schmutz J."/>
            <person name="Larimer F."/>
            <person name="Land M."/>
            <person name="Hauser L."/>
            <person name="Kyrpides N."/>
            <person name="Kim E."/>
            <person name="Tomasz A."/>
            <person name="Richardson P."/>
        </authorList>
    </citation>
    <scope>NUCLEOTIDE SEQUENCE [LARGE SCALE GENOMIC DNA]</scope>
    <source>
        <strain>JH9</strain>
    </source>
</reference>
<sequence>MTLLTRIKTETILLESDIKELIDILISPSIGTDIKYELLSSYSEREIQQQELTYIVRSLINTMYPHQPCYEGAMCVCGTGGDKSNSFNISTTVAFVVASAGVKVIKHGNKSITSNSGSTDLLNQMNIQTTTVDDTPNQLNEKDLVFIGATESYPIMKYMQPVRKMIGKPTILNLVGPLINPYHLTYQMVGVFDPTKLKLVAKTIKDLGRKRAIVLHGANGMDEATLSGDNLIYELTEDGEIKNYTLNATDYGLKHAPNSDFKGGSPEENLAISLNILNGKDQSSRRDVVLLNAGLSLYVAEKVDTIAEGIELATTLIDNGEALKKYHQMRGE</sequence>
<proteinExistence type="inferred from homology"/>
<gene>
    <name evidence="1" type="primary">trpD</name>
    <name type="ordered locus">SaurJH9_1430</name>
</gene>
<evidence type="ECO:0000255" key="1">
    <source>
        <dbReference type="HAMAP-Rule" id="MF_00211"/>
    </source>
</evidence>
<comment type="function">
    <text evidence="1">Catalyzes the transfer of the phosphoribosyl group of 5-phosphorylribose-1-pyrophosphate (PRPP) to anthranilate to yield N-(5'-phosphoribosyl)-anthranilate (PRA).</text>
</comment>
<comment type="catalytic activity">
    <reaction evidence="1">
        <text>N-(5-phospho-beta-D-ribosyl)anthranilate + diphosphate = 5-phospho-alpha-D-ribose 1-diphosphate + anthranilate</text>
        <dbReference type="Rhea" id="RHEA:11768"/>
        <dbReference type="ChEBI" id="CHEBI:16567"/>
        <dbReference type="ChEBI" id="CHEBI:18277"/>
        <dbReference type="ChEBI" id="CHEBI:33019"/>
        <dbReference type="ChEBI" id="CHEBI:58017"/>
        <dbReference type="EC" id="2.4.2.18"/>
    </reaction>
</comment>
<comment type="cofactor">
    <cofactor evidence="1">
        <name>Mg(2+)</name>
        <dbReference type="ChEBI" id="CHEBI:18420"/>
    </cofactor>
    <text evidence="1">Binds 2 magnesium ions per monomer.</text>
</comment>
<comment type="pathway">
    <text evidence="1">Amino-acid biosynthesis; L-tryptophan biosynthesis; L-tryptophan from chorismate: step 2/5.</text>
</comment>
<comment type="subunit">
    <text evidence="1">Homodimer.</text>
</comment>
<comment type="similarity">
    <text evidence="1">Belongs to the anthranilate phosphoribosyltransferase family.</text>
</comment>
<keyword id="KW-0028">Amino-acid biosynthesis</keyword>
<keyword id="KW-0057">Aromatic amino acid biosynthesis</keyword>
<keyword id="KW-0328">Glycosyltransferase</keyword>
<keyword id="KW-0460">Magnesium</keyword>
<keyword id="KW-0479">Metal-binding</keyword>
<keyword id="KW-0808">Transferase</keyword>
<keyword id="KW-0822">Tryptophan biosynthesis</keyword>
<organism>
    <name type="scientific">Staphylococcus aureus (strain JH9)</name>
    <dbReference type="NCBI Taxonomy" id="359786"/>
    <lineage>
        <taxon>Bacteria</taxon>
        <taxon>Bacillati</taxon>
        <taxon>Bacillota</taxon>
        <taxon>Bacilli</taxon>
        <taxon>Bacillales</taxon>
        <taxon>Staphylococcaceae</taxon>
        <taxon>Staphylococcus</taxon>
    </lineage>
</organism>
<dbReference type="EC" id="2.4.2.18" evidence="1"/>
<dbReference type="EMBL" id="CP000703">
    <property type="protein sequence ID" value="ABQ49224.1"/>
    <property type="molecule type" value="Genomic_DNA"/>
</dbReference>
<dbReference type="RefSeq" id="WP_000173833.1">
    <property type="nucleotide sequence ID" value="NC_009487.1"/>
</dbReference>
<dbReference type="SMR" id="A5ISQ1"/>
<dbReference type="KEGG" id="saj:SaurJH9_1430"/>
<dbReference type="HOGENOM" id="CLU_034315_3_0_9"/>
<dbReference type="UniPathway" id="UPA00035">
    <property type="reaction ID" value="UER00041"/>
</dbReference>
<dbReference type="GO" id="GO:0005829">
    <property type="term" value="C:cytosol"/>
    <property type="evidence" value="ECO:0007669"/>
    <property type="project" value="TreeGrafter"/>
</dbReference>
<dbReference type="GO" id="GO:0004048">
    <property type="term" value="F:anthranilate phosphoribosyltransferase activity"/>
    <property type="evidence" value="ECO:0007669"/>
    <property type="project" value="UniProtKB-UniRule"/>
</dbReference>
<dbReference type="GO" id="GO:0000287">
    <property type="term" value="F:magnesium ion binding"/>
    <property type="evidence" value="ECO:0007669"/>
    <property type="project" value="UniProtKB-UniRule"/>
</dbReference>
<dbReference type="GO" id="GO:0000162">
    <property type="term" value="P:L-tryptophan biosynthetic process"/>
    <property type="evidence" value="ECO:0007669"/>
    <property type="project" value="UniProtKB-UniRule"/>
</dbReference>
<dbReference type="FunFam" id="3.40.1030.10:FF:000009">
    <property type="entry name" value="Anthranilate phosphoribosyltransferase"/>
    <property type="match status" value="1"/>
</dbReference>
<dbReference type="Gene3D" id="3.40.1030.10">
    <property type="entry name" value="Nucleoside phosphorylase/phosphoribosyltransferase catalytic domain"/>
    <property type="match status" value="1"/>
</dbReference>
<dbReference type="HAMAP" id="MF_00211">
    <property type="entry name" value="TrpD"/>
    <property type="match status" value="1"/>
</dbReference>
<dbReference type="InterPro" id="IPR005940">
    <property type="entry name" value="Anthranilate_Pribosyl_Tfrase"/>
</dbReference>
<dbReference type="InterPro" id="IPR000312">
    <property type="entry name" value="Glycosyl_Trfase_fam3"/>
</dbReference>
<dbReference type="InterPro" id="IPR035902">
    <property type="entry name" value="Nuc_phospho_transferase"/>
</dbReference>
<dbReference type="NCBIfam" id="TIGR01245">
    <property type="entry name" value="trpD"/>
    <property type="match status" value="1"/>
</dbReference>
<dbReference type="PANTHER" id="PTHR43285">
    <property type="entry name" value="ANTHRANILATE PHOSPHORIBOSYLTRANSFERASE"/>
    <property type="match status" value="1"/>
</dbReference>
<dbReference type="PANTHER" id="PTHR43285:SF2">
    <property type="entry name" value="ANTHRANILATE PHOSPHORIBOSYLTRANSFERASE"/>
    <property type="match status" value="1"/>
</dbReference>
<dbReference type="Pfam" id="PF00591">
    <property type="entry name" value="Glycos_transf_3"/>
    <property type="match status" value="1"/>
</dbReference>
<dbReference type="SUPFAM" id="SSF52418">
    <property type="entry name" value="Nucleoside phosphorylase/phosphoribosyltransferase catalytic domain"/>
    <property type="match status" value="1"/>
</dbReference>
<name>TRPD_STAA9</name>
<feature type="chain" id="PRO_1000099844" description="Anthranilate phosphoribosyltransferase">
    <location>
        <begin position="1"/>
        <end position="332"/>
    </location>
</feature>
<feature type="binding site" evidence="1">
    <location>
        <position position="78"/>
    </location>
    <ligand>
        <name>5-phospho-alpha-D-ribose 1-diphosphate</name>
        <dbReference type="ChEBI" id="CHEBI:58017"/>
    </ligand>
</feature>
<feature type="binding site" evidence="1">
    <location>
        <position position="78"/>
    </location>
    <ligand>
        <name>anthranilate</name>
        <dbReference type="ChEBI" id="CHEBI:16567"/>
        <label>1</label>
    </ligand>
</feature>
<feature type="binding site" evidence="1">
    <location>
        <begin position="81"/>
        <end position="82"/>
    </location>
    <ligand>
        <name>5-phospho-alpha-D-ribose 1-diphosphate</name>
        <dbReference type="ChEBI" id="CHEBI:58017"/>
    </ligand>
</feature>
<feature type="binding site" evidence="1">
    <location>
        <position position="86"/>
    </location>
    <ligand>
        <name>5-phospho-alpha-D-ribose 1-diphosphate</name>
        <dbReference type="ChEBI" id="CHEBI:58017"/>
    </ligand>
</feature>
<feature type="binding site" evidence="1">
    <location>
        <begin position="88"/>
        <end position="91"/>
    </location>
    <ligand>
        <name>5-phospho-alpha-D-ribose 1-diphosphate</name>
        <dbReference type="ChEBI" id="CHEBI:58017"/>
    </ligand>
</feature>
<feature type="binding site" evidence="1">
    <location>
        <position position="90"/>
    </location>
    <ligand>
        <name>Mg(2+)</name>
        <dbReference type="ChEBI" id="CHEBI:18420"/>
        <label>1</label>
    </ligand>
</feature>
<feature type="binding site" evidence="1">
    <location>
        <begin position="106"/>
        <end position="114"/>
    </location>
    <ligand>
        <name>5-phospho-alpha-D-ribose 1-diphosphate</name>
        <dbReference type="ChEBI" id="CHEBI:58017"/>
    </ligand>
</feature>
<feature type="binding site" evidence="1">
    <location>
        <position position="109"/>
    </location>
    <ligand>
        <name>anthranilate</name>
        <dbReference type="ChEBI" id="CHEBI:16567"/>
        <label>1</label>
    </ligand>
</feature>
<feature type="binding site" evidence="1">
    <location>
        <position position="118"/>
    </location>
    <ligand>
        <name>5-phospho-alpha-D-ribose 1-diphosphate</name>
        <dbReference type="ChEBI" id="CHEBI:58017"/>
    </ligand>
</feature>
<feature type="binding site" evidence="1">
    <location>
        <position position="163"/>
    </location>
    <ligand>
        <name>anthranilate</name>
        <dbReference type="ChEBI" id="CHEBI:16567"/>
        <label>2</label>
    </ligand>
</feature>
<feature type="binding site" evidence="1">
    <location>
        <position position="222"/>
    </location>
    <ligand>
        <name>Mg(2+)</name>
        <dbReference type="ChEBI" id="CHEBI:18420"/>
        <label>2</label>
    </ligand>
</feature>
<feature type="binding site" evidence="1">
    <location>
        <position position="223"/>
    </location>
    <ligand>
        <name>Mg(2+)</name>
        <dbReference type="ChEBI" id="CHEBI:18420"/>
        <label>1</label>
    </ligand>
</feature>
<feature type="binding site" evidence="1">
    <location>
        <position position="223"/>
    </location>
    <ligand>
        <name>Mg(2+)</name>
        <dbReference type="ChEBI" id="CHEBI:18420"/>
        <label>2</label>
    </ligand>
</feature>
<accession>A5ISQ1</accession>
<protein>
    <recommendedName>
        <fullName evidence="1">Anthranilate phosphoribosyltransferase</fullName>
        <ecNumber evidence="1">2.4.2.18</ecNumber>
    </recommendedName>
</protein>